<proteinExistence type="evidence at transcript level"/>
<evidence type="ECO:0000256" key="1">
    <source>
        <dbReference type="SAM" id="MobiDB-lite"/>
    </source>
</evidence>
<evidence type="ECO:0000305" key="2"/>
<dbReference type="EMBL" id="M19753">
    <property type="protein sequence ID" value="AAA29626.1"/>
    <property type="molecule type" value="mRNA"/>
</dbReference>
<dbReference type="PIR" id="B31238">
    <property type="entry name" value="B31238"/>
</dbReference>
<dbReference type="PIR" id="JU0164">
    <property type="entry name" value="JU0164"/>
</dbReference>
<dbReference type="SMR" id="P11144"/>
<dbReference type="ChEMBL" id="CHEMBL5193"/>
<dbReference type="EnsemblProtists" id="CAD51185">
    <property type="protein sequence ID" value="CAD51185"/>
    <property type="gene ID" value="PF3D7_0818900"/>
</dbReference>
<dbReference type="VEuPathDB" id="PlasmoDB:PF3D7_0818900"/>
<dbReference type="VEuPathDB" id="PlasmoDB:Pf7G8-2_000234200"/>
<dbReference type="VEuPathDB" id="PlasmoDB:Pf7G8_080024000"/>
<dbReference type="VEuPathDB" id="PlasmoDB:PfCD01_080024500"/>
<dbReference type="VEuPathDB" id="PlasmoDB:PfDd2_080024100"/>
<dbReference type="VEuPathDB" id="PlasmoDB:PfGA01_080022600"/>
<dbReference type="VEuPathDB" id="PlasmoDB:PfGB4_080023700"/>
<dbReference type="VEuPathDB" id="PlasmoDB:PfGN01_080024600"/>
<dbReference type="VEuPathDB" id="PlasmoDB:PfHB3_080024400"/>
<dbReference type="VEuPathDB" id="PlasmoDB:PfIT_080023900"/>
<dbReference type="VEuPathDB" id="PlasmoDB:PfKE01_080024500"/>
<dbReference type="VEuPathDB" id="PlasmoDB:PfKH01_080024000"/>
<dbReference type="VEuPathDB" id="PlasmoDB:PfKH02_080024500"/>
<dbReference type="VEuPathDB" id="PlasmoDB:PfML01_080024500"/>
<dbReference type="VEuPathDB" id="PlasmoDB:PfNF135_000025500"/>
<dbReference type="VEuPathDB" id="PlasmoDB:PfNF166_080022700"/>
<dbReference type="VEuPathDB" id="PlasmoDB:PfNF54_080022700"/>
<dbReference type="VEuPathDB" id="PlasmoDB:PfSD01_080024300"/>
<dbReference type="VEuPathDB" id="PlasmoDB:PfSN01_080023500"/>
<dbReference type="VEuPathDB" id="PlasmoDB:PfTG01_080024800"/>
<dbReference type="GO" id="GO:0005524">
    <property type="term" value="F:ATP binding"/>
    <property type="evidence" value="ECO:0007669"/>
    <property type="project" value="UniProtKB-KW"/>
</dbReference>
<dbReference type="GO" id="GO:0140662">
    <property type="term" value="F:ATP-dependent protein folding chaperone"/>
    <property type="evidence" value="ECO:0007669"/>
    <property type="project" value="InterPro"/>
</dbReference>
<dbReference type="CDD" id="cd10233">
    <property type="entry name" value="ASKHA_NBD_HSP70_HSPA1"/>
    <property type="match status" value="1"/>
</dbReference>
<dbReference type="FunFam" id="2.60.34.10:FF:000002">
    <property type="entry name" value="Heat shock 70 kDa"/>
    <property type="match status" value="1"/>
</dbReference>
<dbReference type="FunFam" id="3.90.640.10:FF:000002">
    <property type="entry name" value="Heat shock 70 kDa"/>
    <property type="match status" value="1"/>
</dbReference>
<dbReference type="FunFam" id="3.30.420.40:FF:000172">
    <property type="entry name" value="Heat shock 70 kDa protein"/>
    <property type="match status" value="2"/>
</dbReference>
<dbReference type="FunFam" id="3.30.30.30:FF:000001">
    <property type="entry name" value="heat shock 70 kDa protein-like"/>
    <property type="match status" value="1"/>
</dbReference>
<dbReference type="FunFam" id="1.20.1270.10:FF:000022">
    <property type="entry name" value="Heat shock protein 70"/>
    <property type="match status" value="1"/>
</dbReference>
<dbReference type="FunFam" id="3.30.420.40:FF:000026">
    <property type="entry name" value="Heat shock protein 70"/>
    <property type="match status" value="1"/>
</dbReference>
<dbReference type="Gene3D" id="1.20.1270.10">
    <property type="match status" value="1"/>
</dbReference>
<dbReference type="Gene3D" id="3.30.30.30">
    <property type="match status" value="1"/>
</dbReference>
<dbReference type="Gene3D" id="3.30.420.40">
    <property type="match status" value="2"/>
</dbReference>
<dbReference type="Gene3D" id="3.90.640.10">
    <property type="entry name" value="Actin, Chain A, domain 4"/>
    <property type="match status" value="1"/>
</dbReference>
<dbReference type="Gene3D" id="2.60.34.10">
    <property type="entry name" value="Substrate Binding Domain Of DNAk, Chain A, domain 1"/>
    <property type="match status" value="1"/>
</dbReference>
<dbReference type="InterPro" id="IPR043129">
    <property type="entry name" value="ATPase_NBD"/>
</dbReference>
<dbReference type="InterPro" id="IPR018181">
    <property type="entry name" value="Heat_shock_70_CS"/>
</dbReference>
<dbReference type="InterPro" id="IPR029048">
    <property type="entry name" value="HSP70_C_sf"/>
</dbReference>
<dbReference type="InterPro" id="IPR029047">
    <property type="entry name" value="HSP70_peptide-bd_sf"/>
</dbReference>
<dbReference type="InterPro" id="IPR013126">
    <property type="entry name" value="Hsp_70_fam"/>
</dbReference>
<dbReference type="NCBIfam" id="NF001413">
    <property type="entry name" value="PRK00290.1"/>
    <property type="match status" value="1"/>
</dbReference>
<dbReference type="PANTHER" id="PTHR19375">
    <property type="entry name" value="HEAT SHOCK PROTEIN 70KDA"/>
    <property type="match status" value="1"/>
</dbReference>
<dbReference type="Pfam" id="PF00012">
    <property type="entry name" value="HSP70"/>
    <property type="match status" value="1"/>
</dbReference>
<dbReference type="PRINTS" id="PR00301">
    <property type="entry name" value="HEATSHOCK70"/>
</dbReference>
<dbReference type="SUPFAM" id="SSF53067">
    <property type="entry name" value="Actin-like ATPase domain"/>
    <property type="match status" value="2"/>
</dbReference>
<dbReference type="SUPFAM" id="SSF100934">
    <property type="entry name" value="Heat shock protein 70kD (HSP70), C-terminal subdomain"/>
    <property type="match status" value="1"/>
</dbReference>
<dbReference type="SUPFAM" id="SSF100920">
    <property type="entry name" value="Heat shock protein 70kD (HSP70), peptide-binding domain"/>
    <property type="match status" value="1"/>
</dbReference>
<dbReference type="PROSITE" id="PS00297">
    <property type="entry name" value="HSP70_1"/>
    <property type="match status" value="1"/>
</dbReference>
<dbReference type="PROSITE" id="PS00329">
    <property type="entry name" value="HSP70_2"/>
    <property type="match status" value="1"/>
</dbReference>
<dbReference type="PROSITE" id="PS01036">
    <property type="entry name" value="HSP70_3"/>
    <property type="match status" value="1"/>
</dbReference>
<accession>P11144</accession>
<name>HSP70_PLAFA</name>
<keyword id="KW-0067">ATP-binding</keyword>
<keyword id="KW-0547">Nucleotide-binding</keyword>
<keyword id="KW-0346">Stress response</keyword>
<protein>
    <recommendedName>
        <fullName>Heat shock 70 kDa protein</fullName>
        <shortName>HSP70</shortName>
    </recommendedName>
    <alternativeName>
        <fullName>74.3 kDa protein</fullName>
    </alternativeName>
    <alternativeName>
        <fullName>Cytoplasmic antigen</fullName>
    </alternativeName>
</protein>
<reference key="1">
    <citation type="journal article" date="1987" name="Mol. Biochem. Parasitol.">
        <title>The primary structure of a Plasmodium falciparum polypeptide related to heat shock proteins.</title>
        <authorList>
            <person name="Yang Y.-F."/>
            <person name="Tan-Ariya P."/>
            <person name="Sharma Y.D."/>
            <person name="Kilejian A."/>
        </authorList>
    </citation>
    <scope>NUCLEOTIDE SEQUENCE [MRNA]</scope>
</reference>
<reference key="2">
    <citation type="journal article" date="1986" name="Proc. Natl. Acad. Sci. U.S.A.">
        <title>A repetitive antigen of Plasmodium falciparum that is homologous to heat shock protein 70 of Drosophila melanogaster.</title>
        <authorList>
            <person name="Bianco A.E."/>
            <person name="Favaloro J.M."/>
            <person name="Burkot T.R."/>
            <person name="Culvenor J.G."/>
            <person name="Crewther P.E."/>
            <person name="Brown G.V."/>
            <person name="Anders R.F."/>
            <person name="Coppel R.L."/>
            <person name="Kemp D.J."/>
        </authorList>
    </citation>
    <scope>NUCLEOTIDE SEQUENCE [MRNA] OF 367-681</scope>
</reference>
<sequence length="681" mass="74287">MASAKGSKPNLPESNIAIGIDLGTTYSCVGVWRNENVDIIANDQGNRTTPSYVAFTDTERLIGDAAKNQVARNPENTVFDAKRLIGRKFTESSVQSDMKHWPFTVKSGVDEKPMIEVTYQGEKKLFHPEEISSMVLQKMKENAEAFLGKSIKNAVITVPAYFNDSQRQATKDAGTIAGLNVMRIINEPTAAAIAYGLHKKGKGEKNILIFDLGGGTFDVSLLTIEDGIFEVKATAGDTHLGGEDFDNRLVNFCVEDFKRKNRGKDLSKNSRALRRLRTQCERAKRTLSSSTQATIEIDSLFEGIDYSVTVSRARFEELCIDYFRDTLIPVEKVLKDAMMDKKSVHEVVLVGGSTRIPKIQTLIKEFFNGKEACRSINPDEAVAYGAAVQAAILSGDQSNAVQDLLLLDVCSLSLGLETAGGVMTKLIERNTTIPAKKSQIFTTYADNQPGVLIQVYEGERALTKDNNLLGKFHLDGIPPAPRKVPQIEVTFDIDANGILNVTAVEKSTGKQNHITITNDKGRLSQDEIDRMVNDAEKYKAEDEENRKRIEARNSLENYCYGVKSSLEDQKIKEKLQPAEIETCMKTITTILEWLEKNQLAGKDEYEAKQKEAESVCAPIMSKIYQDAAGAAGGMPGGMPGGMPGGMPSGMPGGMNFPGGMPGAGMPGNAPAGSGPTVEEVD</sequence>
<feature type="chain" id="PRO_0000078311" description="Heat shock 70 kDa protein">
    <location>
        <begin position="1"/>
        <end position="681"/>
    </location>
</feature>
<feature type="region of interest" description="Disordered" evidence="1">
    <location>
        <begin position="655"/>
        <end position="681"/>
    </location>
</feature>
<feature type="compositionally biased region" description="Gly residues" evidence="1">
    <location>
        <begin position="655"/>
        <end position="665"/>
    </location>
</feature>
<feature type="compositionally biased region" description="Low complexity" evidence="1">
    <location>
        <begin position="666"/>
        <end position="675"/>
    </location>
</feature>
<feature type="sequence conflict" description="In Ref. 2." evidence="2" ref="2">
    <location>
        <begin position="648"/>
        <end position="651"/>
    </location>
</feature>
<feature type="sequence conflict" description="In Ref. 2." evidence="2" ref="2">
    <original>D</original>
    <variation>AEF</variation>
    <location>
        <position position="681"/>
    </location>
</feature>
<comment type="similarity">
    <text evidence="2">Belongs to the heat shock protein 70 family.</text>
</comment>
<organism>
    <name type="scientific">Plasmodium falciparum</name>
    <dbReference type="NCBI Taxonomy" id="5833"/>
    <lineage>
        <taxon>Eukaryota</taxon>
        <taxon>Sar</taxon>
        <taxon>Alveolata</taxon>
        <taxon>Apicomplexa</taxon>
        <taxon>Aconoidasida</taxon>
        <taxon>Haemosporida</taxon>
        <taxon>Plasmodiidae</taxon>
        <taxon>Plasmodium</taxon>
        <taxon>Plasmodium (Laverania)</taxon>
    </lineage>
</organism>